<sequence>MTSTPTALSIAQDLLRCPSVTPADAGALDVLETLLKGAGFTVHRVTFSEPGTADIDNLYARIGNTSPHLCFAGHTDVVPPGDASAWTHGAFAGDVADGLLYGRGAVDMKGGIACAVAATLDYLAANGGQPKGSISFLITGDEEDVAVNGTVKLLQWAAERGEQFDHCIVGEPSNVETIGDTIKIGRRGSQSGVLIVDGVQGHVAYPHRAANPVPDIAKLITALNDEPLDHGSAQFQPSNLEFTSVDVGNPATNVIPAQARAKFNIRFNDHHTQETLKALVEHRLVAACGNRIRAHIEWLPSNADVFVTKPGAFTDLVGAAIAEVTRRTPELNTGGGTSDARFIAKYCQVVEFGLVGQTMHQIDERTPVSDLDKLTAIYRGVLERYFK</sequence>
<name>DAPE_RHOPA</name>
<gene>
    <name evidence="1" type="primary">dapE</name>
    <name type="ordered locus">RPA0624</name>
</gene>
<proteinExistence type="inferred from homology"/>
<keyword id="KW-0028">Amino-acid biosynthesis</keyword>
<keyword id="KW-0170">Cobalt</keyword>
<keyword id="KW-0220">Diaminopimelate biosynthesis</keyword>
<keyword id="KW-0378">Hydrolase</keyword>
<keyword id="KW-0457">Lysine biosynthesis</keyword>
<keyword id="KW-0479">Metal-binding</keyword>
<keyword id="KW-0862">Zinc</keyword>
<dbReference type="EC" id="3.5.1.18" evidence="1"/>
<dbReference type="EMBL" id="BX572594">
    <property type="protein sequence ID" value="CAE26068.1"/>
    <property type="molecule type" value="Genomic_DNA"/>
</dbReference>
<dbReference type="RefSeq" id="WP_011156192.1">
    <property type="nucleotide sequence ID" value="NZ_CP116810.1"/>
</dbReference>
<dbReference type="SMR" id="Q6NC49"/>
<dbReference type="STRING" id="258594.RPA0624"/>
<dbReference type="GeneID" id="66891645"/>
<dbReference type="eggNOG" id="COG0624">
    <property type="taxonomic scope" value="Bacteria"/>
</dbReference>
<dbReference type="HOGENOM" id="CLU_021802_4_0_5"/>
<dbReference type="PhylomeDB" id="Q6NC49"/>
<dbReference type="UniPathway" id="UPA00034">
    <property type="reaction ID" value="UER00021"/>
</dbReference>
<dbReference type="GO" id="GO:0008777">
    <property type="term" value="F:acetylornithine deacetylase activity"/>
    <property type="evidence" value="ECO:0007669"/>
    <property type="project" value="TreeGrafter"/>
</dbReference>
<dbReference type="GO" id="GO:0050897">
    <property type="term" value="F:cobalt ion binding"/>
    <property type="evidence" value="ECO:0007669"/>
    <property type="project" value="UniProtKB-UniRule"/>
</dbReference>
<dbReference type="GO" id="GO:0009014">
    <property type="term" value="F:succinyl-diaminopimelate desuccinylase activity"/>
    <property type="evidence" value="ECO:0007669"/>
    <property type="project" value="UniProtKB-UniRule"/>
</dbReference>
<dbReference type="GO" id="GO:0008270">
    <property type="term" value="F:zinc ion binding"/>
    <property type="evidence" value="ECO:0007669"/>
    <property type="project" value="UniProtKB-UniRule"/>
</dbReference>
<dbReference type="GO" id="GO:0019877">
    <property type="term" value="P:diaminopimelate biosynthetic process"/>
    <property type="evidence" value="ECO:0007669"/>
    <property type="project" value="UniProtKB-UniRule"/>
</dbReference>
<dbReference type="GO" id="GO:0006526">
    <property type="term" value="P:L-arginine biosynthetic process"/>
    <property type="evidence" value="ECO:0007669"/>
    <property type="project" value="TreeGrafter"/>
</dbReference>
<dbReference type="GO" id="GO:0009089">
    <property type="term" value="P:lysine biosynthetic process via diaminopimelate"/>
    <property type="evidence" value="ECO:0007669"/>
    <property type="project" value="UniProtKB-UniRule"/>
</dbReference>
<dbReference type="CDD" id="cd03891">
    <property type="entry name" value="M20_DapE_proteobac"/>
    <property type="match status" value="1"/>
</dbReference>
<dbReference type="Gene3D" id="3.40.630.10">
    <property type="entry name" value="Zn peptidases"/>
    <property type="match status" value="2"/>
</dbReference>
<dbReference type="HAMAP" id="MF_01690">
    <property type="entry name" value="DapE"/>
    <property type="match status" value="1"/>
</dbReference>
<dbReference type="InterPro" id="IPR036264">
    <property type="entry name" value="Bact_exopeptidase_dim_dom"/>
</dbReference>
<dbReference type="InterPro" id="IPR005941">
    <property type="entry name" value="DapE_proteobac"/>
</dbReference>
<dbReference type="InterPro" id="IPR002933">
    <property type="entry name" value="Peptidase_M20"/>
</dbReference>
<dbReference type="InterPro" id="IPR011650">
    <property type="entry name" value="Peptidase_M20_dimer"/>
</dbReference>
<dbReference type="InterPro" id="IPR050072">
    <property type="entry name" value="Peptidase_M20A"/>
</dbReference>
<dbReference type="NCBIfam" id="TIGR01246">
    <property type="entry name" value="dapE_proteo"/>
    <property type="match status" value="1"/>
</dbReference>
<dbReference type="NCBIfam" id="NF009557">
    <property type="entry name" value="PRK13009.1"/>
    <property type="match status" value="1"/>
</dbReference>
<dbReference type="PANTHER" id="PTHR43808">
    <property type="entry name" value="ACETYLORNITHINE DEACETYLASE"/>
    <property type="match status" value="1"/>
</dbReference>
<dbReference type="PANTHER" id="PTHR43808:SF31">
    <property type="entry name" value="N-ACETYL-L-CITRULLINE DEACETYLASE"/>
    <property type="match status" value="1"/>
</dbReference>
<dbReference type="Pfam" id="PF07687">
    <property type="entry name" value="M20_dimer"/>
    <property type="match status" value="1"/>
</dbReference>
<dbReference type="Pfam" id="PF01546">
    <property type="entry name" value="Peptidase_M20"/>
    <property type="match status" value="1"/>
</dbReference>
<dbReference type="SUPFAM" id="SSF55031">
    <property type="entry name" value="Bacterial exopeptidase dimerisation domain"/>
    <property type="match status" value="1"/>
</dbReference>
<dbReference type="SUPFAM" id="SSF53187">
    <property type="entry name" value="Zn-dependent exopeptidases"/>
    <property type="match status" value="1"/>
</dbReference>
<comment type="function">
    <text evidence="1">Catalyzes the hydrolysis of N-succinyl-L,L-diaminopimelic acid (SDAP), forming succinate and LL-2,6-diaminopimelate (DAP), an intermediate involved in the bacterial biosynthesis of lysine and meso-diaminopimelic acid, an essential component of bacterial cell walls.</text>
</comment>
<comment type="catalytic activity">
    <reaction evidence="1">
        <text>N-succinyl-(2S,6S)-2,6-diaminopimelate + H2O = (2S,6S)-2,6-diaminopimelate + succinate</text>
        <dbReference type="Rhea" id="RHEA:22608"/>
        <dbReference type="ChEBI" id="CHEBI:15377"/>
        <dbReference type="ChEBI" id="CHEBI:30031"/>
        <dbReference type="ChEBI" id="CHEBI:57609"/>
        <dbReference type="ChEBI" id="CHEBI:58087"/>
        <dbReference type="EC" id="3.5.1.18"/>
    </reaction>
</comment>
<comment type="cofactor">
    <cofactor evidence="1">
        <name>Zn(2+)</name>
        <dbReference type="ChEBI" id="CHEBI:29105"/>
    </cofactor>
    <cofactor evidence="1">
        <name>Co(2+)</name>
        <dbReference type="ChEBI" id="CHEBI:48828"/>
    </cofactor>
    <text evidence="1">Binds 2 Zn(2+) or Co(2+) ions per subunit.</text>
</comment>
<comment type="pathway">
    <text evidence="1">Amino-acid biosynthesis; L-lysine biosynthesis via DAP pathway; LL-2,6-diaminopimelate from (S)-tetrahydrodipicolinate (succinylase route): step 3/3.</text>
</comment>
<comment type="subunit">
    <text evidence="1">Homodimer.</text>
</comment>
<comment type="similarity">
    <text evidence="1">Belongs to the peptidase M20A family. DapE subfamily.</text>
</comment>
<evidence type="ECO:0000255" key="1">
    <source>
        <dbReference type="HAMAP-Rule" id="MF_01690"/>
    </source>
</evidence>
<feature type="chain" id="PRO_0000375689" description="Succinyl-diaminopimelate desuccinylase">
    <location>
        <begin position="1"/>
        <end position="387"/>
    </location>
</feature>
<feature type="active site" evidence="1">
    <location>
        <position position="76"/>
    </location>
</feature>
<feature type="active site" description="Proton acceptor" evidence="1">
    <location>
        <position position="142"/>
    </location>
</feature>
<feature type="binding site" evidence="1">
    <location>
        <position position="74"/>
    </location>
    <ligand>
        <name>Zn(2+)</name>
        <dbReference type="ChEBI" id="CHEBI:29105"/>
        <label>1</label>
    </ligand>
</feature>
<feature type="binding site" evidence="1">
    <location>
        <position position="107"/>
    </location>
    <ligand>
        <name>Zn(2+)</name>
        <dbReference type="ChEBI" id="CHEBI:29105"/>
        <label>1</label>
    </ligand>
</feature>
<feature type="binding site" evidence="1">
    <location>
        <position position="107"/>
    </location>
    <ligand>
        <name>Zn(2+)</name>
        <dbReference type="ChEBI" id="CHEBI:29105"/>
        <label>2</label>
    </ligand>
</feature>
<feature type="binding site" evidence="1">
    <location>
        <position position="143"/>
    </location>
    <ligand>
        <name>Zn(2+)</name>
        <dbReference type="ChEBI" id="CHEBI:29105"/>
        <label>2</label>
    </ligand>
</feature>
<feature type="binding site" evidence="1">
    <location>
        <position position="171"/>
    </location>
    <ligand>
        <name>Zn(2+)</name>
        <dbReference type="ChEBI" id="CHEBI:29105"/>
        <label>1</label>
    </ligand>
</feature>
<feature type="binding site" evidence="1">
    <location>
        <position position="360"/>
    </location>
    <ligand>
        <name>Zn(2+)</name>
        <dbReference type="ChEBI" id="CHEBI:29105"/>
        <label>2</label>
    </ligand>
</feature>
<organism>
    <name type="scientific">Rhodopseudomonas palustris (strain ATCC BAA-98 / CGA009)</name>
    <dbReference type="NCBI Taxonomy" id="258594"/>
    <lineage>
        <taxon>Bacteria</taxon>
        <taxon>Pseudomonadati</taxon>
        <taxon>Pseudomonadota</taxon>
        <taxon>Alphaproteobacteria</taxon>
        <taxon>Hyphomicrobiales</taxon>
        <taxon>Nitrobacteraceae</taxon>
        <taxon>Rhodopseudomonas</taxon>
    </lineage>
</organism>
<accession>Q6NC49</accession>
<reference key="1">
    <citation type="journal article" date="2004" name="Nat. Biotechnol.">
        <title>Complete genome sequence of the metabolically versatile photosynthetic bacterium Rhodopseudomonas palustris.</title>
        <authorList>
            <person name="Larimer F.W."/>
            <person name="Chain P."/>
            <person name="Hauser L."/>
            <person name="Lamerdin J.E."/>
            <person name="Malfatti S."/>
            <person name="Do L."/>
            <person name="Land M.L."/>
            <person name="Pelletier D.A."/>
            <person name="Beatty J.T."/>
            <person name="Lang A.S."/>
            <person name="Tabita F.R."/>
            <person name="Gibson J.L."/>
            <person name="Hanson T.E."/>
            <person name="Bobst C."/>
            <person name="Torres y Torres J.L."/>
            <person name="Peres C."/>
            <person name="Harrison F.H."/>
            <person name="Gibson J."/>
            <person name="Harwood C.S."/>
        </authorList>
    </citation>
    <scope>NUCLEOTIDE SEQUENCE [LARGE SCALE GENOMIC DNA]</scope>
    <source>
        <strain>ATCC BAA-98 / CGA009</strain>
    </source>
</reference>
<protein>
    <recommendedName>
        <fullName evidence="1">Succinyl-diaminopimelate desuccinylase</fullName>
        <shortName evidence="1">SDAP desuccinylase</shortName>
        <ecNumber evidence="1">3.5.1.18</ecNumber>
    </recommendedName>
    <alternativeName>
        <fullName evidence="1">N-succinyl-LL-2,6-diaminoheptanedioate amidohydrolase</fullName>
    </alternativeName>
</protein>